<gene>
    <name evidence="6 9" type="primary">IFRD2</name>
</gene>
<feature type="chain" id="PRO_0000153289" description="Interferon-related developmental regulator 2">
    <location>
        <begin position="1"/>
        <end position="442"/>
    </location>
</feature>
<feature type="region of interest" description="Disordered" evidence="2">
    <location>
        <begin position="1"/>
        <end position="71"/>
    </location>
</feature>
<feature type="compositionally biased region" description="Basic residues" evidence="2">
    <location>
        <begin position="1"/>
        <end position="15"/>
    </location>
</feature>
<feature type="compositionally biased region" description="Polar residues" evidence="2">
    <location>
        <begin position="43"/>
        <end position="56"/>
    </location>
</feature>
<feature type="sequence variant" id="VAR_029302" description="In dbSNP:rs2229648." evidence="3">
    <original>R</original>
    <variation>Q</variation>
    <location>
        <position position="438"/>
    </location>
</feature>
<protein>
    <recommendedName>
        <fullName evidence="8">Interferon-related developmental regulator 2</fullName>
    </recommendedName>
    <alternativeName>
        <fullName evidence="7">Protein SKMC15</fullName>
    </alternativeName>
</protein>
<name>IFRD2_HUMAN</name>
<organism>
    <name type="scientific">Homo sapiens</name>
    <name type="common">Human</name>
    <dbReference type="NCBI Taxonomy" id="9606"/>
    <lineage>
        <taxon>Eukaryota</taxon>
        <taxon>Metazoa</taxon>
        <taxon>Chordata</taxon>
        <taxon>Craniata</taxon>
        <taxon>Vertebrata</taxon>
        <taxon>Euteleostomi</taxon>
        <taxon>Mammalia</taxon>
        <taxon>Eutheria</taxon>
        <taxon>Euarchontoglires</taxon>
        <taxon>Primates</taxon>
        <taxon>Haplorrhini</taxon>
        <taxon>Catarrhini</taxon>
        <taxon>Hominidae</taxon>
        <taxon>Homo</taxon>
    </lineage>
</organism>
<reference key="1">
    <citation type="submission" date="1999-09" db="EMBL/GenBank/DDBJ databases">
        <authorList>
            <person name="Buanne P."/>
            <person name="Incerti B."/>
            <person name="Tirone F."/>
        </authorList>
    </citation>
    <scope>NUCLEOTIDE SEQUENCE [MRNA]</scope>
    <source>
        <tissue>Brain</tissue>
    </source>
</reference>
<reference key="2">
    <citation type="journal article" date="2006" name="Nature">
        <title>The DNA sequence, annotation and analysis of human chromosome 3.</title>
        <authorList>
            <person name="Muzny D.M."/>
            <person name="Scherer S.E."/>
            <person name="Kaul R."/>
            <person name="Wang J."/>
            <person name="Yu J."/>
            <person name="Sudbrak R."/>
            <person name="Buhay C.J."/>
            <person name="Chen R."/>
            <person name="Cree A."/>
            <person name="Ding Y."/>
            <person name="Dugan-Rocha S."/>
            <person name="Gill R."/>
            <person name="Gunaratne P."/>
            <person name="Harris R.A."/>
            <person name="Hawes A.C."/>
            <person name="Hernandez J."/>
            <person name="Hodgson A.V."/>
            <person name="Hume J."/>
            <person name="Jackson A."/>
            <person name="Khan Z.M."/>
            <person name="Kovar-Smith C."/>
            <person name="Lewis L.R."/>
            <person name="Lozado R.J."/>
            <person name="Metzker M.L."/>
            <person name="Milosavljevic A."/>
            <person name="Miner G.R."/>
            <person name="Morgan M.B."/>
            <person name="Nazareth L.V."/>
            <person name="Scott G."/>
            <person name="Sodergren E."/>
            <person name="Song X.-Z."/>
            <person name="Steffen D."/>
            <person name="Wei S."/>
            <person name="Wheeler D.A."/>
            <person name="Wright M.W."/>
            <person name="Worley K.C."/>
            <person name="Yuan Y."/>
            <person name="Zhang Z."/>
            <person name="Adams C.Q."/>
            <person name="Ansari-Lari M.A."/>
            <person name="Ayele M."/>
            <person name="Brown M.J."/>
            <person name="Chen G."/>
            <person name="Chen Z."/>
            <person name="Clendenning J."/>
            <person name="Clerc-Blankenburg K.P."/>
            <person name="Chen R."/>
            <person name="Chen Z."/>
            <person name="Davis C."/>
            <person name="Delgado O."/>
            <person name="Dinh H.H."/>
            <person name="Dong W."/>
            <person name="Draper H."/>
            <person name="Ernst S."/>
            <person name="Fu G."/>
            <person name="Gonzalez-Garay M.L."/>
            <person name="Garcia D.K."/>
            <person name="Gillett W."/>
            <person name="Gu J."/>
            <person name="Hao B."/>
            <person name="Haugen E."/>
            <person name="Havlak P."/>
            <person name="He X."/>
            <person name="Hennig S."/>
            <person name="Hu S."/>
            <person name="Huang W."/>
            <person name="Jackson L.R."/>
            <person name="Jacob L.S."/>
            <person name="Kelly S.H."/>
            <person name="Kube M."/>
            <person name="Levy R."/>
            <person name="Li Z."/>
            <person name="Liu B."/>
            <person name="Liu J."/>
            <person name="Liu W."/>
            <person name="Lu J."/>
            <person name="Maheshwari M."/>
            <person name="Nguyen B.-V."/>
            <person name="Okwuonu G.O."/>
            <person name="Palmeiri A."/>
            <person name="Pasternak S."/>
            <person name="Perez L.M."/>
            <person name="Phelps K.A."/>
            <person name="Plopper F.J."/>
            <person name="Qiang B."/>
            <person name="Raymond C."/>
            <person name="Rodriguez R."/>
            <person name="Saenphimmachak C."/>
            <person name="Santibanez J."/>
            <person name="Shen H."/>
            <person name="Shen Y."/>
            <person name="Subramanian S."/>
            <person name="Tabor P.E."/>
            <person name="Verduzco D."/>
            <person name="Waldron L."/>
            <person name="Wang J."/>
            <person name="Wang J."/>
            <person name="Wang Q."/>
            <person name="Williams G.A."/>
            <person name="Wong G.K.-S."/>
            <person name="Yao Z."/>
            <person name="Zhang J."/>
            <person name="Zhang X."/>
            <person name="Zhao G."/>
            <person name="Zhou J."/>
            <person name="Zhou Y."/>
            <person name="Nelson D."/>
            <person name="Lehrach H."/>
            <person name="Reinhardt R."/>
            <person name="Naylor S.L."/>
            <person name="Yang H."/>
            <person name="Olson M."/>
            <person name="Weinstock G."/>
            <person name="Gibbs R.A."/>
        </authorList>
    </citation>
    <scope>NUCLEOTIDE SEQUENCE [LARGE SCALE GENOMIC DNA]</scope>
</reference>
<reference key="3">
    <citation type="submission" date="2005-07" db="EMBL/GenBank/DDBJ databases">
        <authorList>
            <person name="Mural R.J."/>
            <person name="Istrail S."/>
            <person name="Sutton G."/>
            <person name="Florea L."/>
            <person name="Halpern A.L."/>
            <person name="Mobarry C.M."/>
            <person name="Lippert R."/>
            <person name="Walenz B."/>
            <person name="Shatkay H."/>
            <person name="Dew I."/>
            <person name="Miller J.R."/>
            <person name="Flanigan M.J."/>
            <person name="Edwards N.J."/>
            <person name="Bolanos R."/>
            <person name="Fasulo D."/>
            <person name="Halldorsson B.V."/>
            <person name="Hannenhalli S."/>
            <person name="Turner R."/>
            <person name="Yooseph S."/>
            <person name="Lu F."/>
            <person name="Nusskern D.R."/>
            <person name="Shue B.C."/>
            <person name="Zheng X.H."/>
            <person name="Zhong F."/>
            <person name="Delcher A.L."/>
            <person name="Huson D.H."/>
            <person name="Kravitz S.A."/>
            <person name="Mouchard L."/>
            <person name="Reinert K."/>
            <person name="Remington K.A."/>
            <person name="Clark A.G."/>
            <person name="Waterman M.S."/>
            <person name="Eichler E.E."/>
            <person name="Adams M.D."/>
            <person name="Hunkapiller M.W."/>
            <person name="Myers E.W."/>
            <person name="Venter J.C."/>
        </authorList>
    </citation>
    <scope>NUCLEOTIDE SEQUENCE [LARGE SCALE GENOMIC DNA]</scope>
</reference>
<reference key="4">
    <citation type="journal article" date="2004" name="Genome Res.">
        <title>The status, quality, and expansion of the NIH full-length cDNA project: the Mammalian Gene Collection (MGC).</title>
        <authorList>
            <consortium name="The MGC Project Team"/>
        </authorList>
    </citation>
    <scope>NUCLEOTIDE SEQUENCE [LARGE SCALE MRNA]</scope>
    <scope>VARIANT GLN-438</scope>
    <source>
        <tissue>Cervix</tissue>
        <tissue>Kidney</tissue>
        <tissue>Muscle</tissue>
        <tissue>Placenta</tissue>
    </source>
</reference>
<reference key="5">
    <citation type="journal article" date="1997" name="Hum. Genet.">
        <title>The human homolog of the rodent immediate early response genes, PC4 and TIS7, resides in the lung cancer tumor suppressor gene region on chromosome 3p21.</title>
        <authorList>
            <person name="Latif F."/>
            <person name="Duh F.-M."/>
            <person name="Bader S."/>
            <person name="Sekido Y."/>
            <person name="Li H."/>
            <person name="Geil L."/>
            <person name="Zbar B."/>
            <person name="Minna J.D."/>
            <person name="Lerman M.I."/>
        </authorList>
    </citation>
    <scope>NUCLEOTIDE SEQUENCE [MRNA] OF 2-442</scope>
    <scope>TISSUE SPECIFICITY</scope>
    <source>
        <tissue>Skeletal muscle</tissue>
    </source>
</reference>
<reference key="6">
    <citation type="journal article" date="2018" name="Elife">
        <title>Structures of translationally inactive mammalian ribosomes.</title>
        <authorList>
            <person name="Brown A."/>
            <person name="Baird M.R."/>
            <person name="Yip M.C."/>
            <person name="Murray J."/>
            <person name="Shao S."/>
        </authorList>
    </citation>
    <scope>FUNCTION</scope>
    <scope>RIBOSOME-BINDING</scope>
</reference>
<accession>Q12894</accession>
<accession>A0A0R4J2F6</accession>
<accession>Q9BVB4</accession>
<accession>Q9UJ88</accession>
<proteinExistence type="evidence at protein level"/>
<evidence type="ECO:0000250" key="1">
    <source>
        <dbReference type="UniProtKB" id="P0DX19"/>
    </source>
</evidence>
<evidence type="ECO:0000256" key="2">
    <source>
        <dbReference type="SAM" id="MobiDB-lite"/>
    </source>
</evidence>
<evidence type="ECO:0000269" key="3">
    <source>
    </source>
</evidence>
<evidence type="ECO:0000269" key="4">
    <source>
    </source>
</evidence>
<evidence type="ECO:0000269" key="5">
    <source>
    </source>
</evidence>
<evidence type="ECO:0000303" key="6">
    <source>
    </source>
</evidence>
<evidence type="ECO:0000303" key="7">
    <source>
    </source>
</evidence>
<evidence type="ECO:0000305" key="8"/>
<evidence type="ECO:0000312" key="9">
    <source>
        <dbReference type="HGNC" id="HGNC:5457"/>
    </source>
</evidence>
<dbReference type="EMBL" id="Y12395">
    <property type="protein sequence ID" value="CAA73027.1"/>
    <property type="status" value="ALT_INIT"/>
    <property type="molecule type" value="mRNA"/>
</dbReference>
<dbReference type="EMBL" id="U73167">
    <property type="protein sequence ID" value="AAC02728.1"/>
    <property type="molecule type" value="Genomic_DNA"/>
</dbReference>
<dbReference type="EMBL" id="U90094">
    <property type="status" value="NOT_ANNOTATED_CDS"/>
    <property type="molecule type" value="Genomic_DNA"/>
</dbReference>
<dbReference type="EMBL" id="CH471055">
    <property type="protein sequence ID" value="EAW65070.1"/>
    <property type="status" value="ALT_SEQ"/>
    <property type="molecule type" value="Genomic_DNA"/>
</dbReference>
<dbReference type="EMBL" id="BC001327">
    <property type="protein sequence ID" value="AAH01327.1"/>
    <property type="molecule type" value="mRNA"/>
</dbReference>
<dbReference type="EMBL" id="BC001676">
    <property type="protein sequence ID" value="AAH01676.1"/>
    <property type="molecule type" value="mRNA"/>
</dbReference>
<dbReference type="EMBL" id="BC007265">
    <property type="protein sequence ID" value="AAH07265.1"/>
    <property type="molecule type" value="mRNA"/>
</dbReference>
<dbReference type="EMBL" id="BC007437">
    <property type="protein sequence ID" value="AAH07437.3"/>
    <property type="molecule type" value="mRNA"/>
</dbReference>
<dbReference type="EMBL" id="BI826806">
    <property type="status" value="NOT_ANNOTATED_CDS"/>
    <property type="molecule type" value="mRNA"/>
</dbReference>
<dbReference type="EMBL" id="U09585">
    <property type="protein sequence ID" value="AAC16924.1"/>
    <property type="molecule type" value="mRNA"/>
</dbReference>
<dbReference type="CCDS" id="CCDS77746.2"/>
<dbReference type="RefSeq" id="NP_006755.4">
    <property type="nucleotide sequence ID" value="NM_006764.4"/>
</dbReference>
<dbReference type="SMR" id="Q12894"/>
<dbReference type="BioGRID" id="113616">
    <property type="interactions" value="34"/>
</dbReference>
<dbReference type="FunCoup" id="Q12894">
    <property type="interactions" value="1621"/>
</dbReference>
<dbReference type="IntAct" id="Q12894">
    <property type="interactions" value="24"/>
</dbReference>
<dbReference type="MINT" id="Q12894"/>
<dbReference type="STRING" id="9606.ENSP00000402849"/>
<dbReference type="iPTMnet" id="Q12894"/>
<dbReference type="PhosphoSitePlus" id="Q12894"/>
<dbReference type="BioMuta" id="IFRD2"/>
<dbReference type="DMDM" id="327478577"/>
<dbReference type="jPOST" id="Q12894"/>
<dbReference type="MassIVE" id="Q12894"/>
<dbReference type="PaxDb" id="9606-ENSP00000392316"/>
<dbReference type="PeptideAtlas" id="Q12894"/>
<dbReference type="Pumba" id="Q12894"/>
<dbReference type="Antibodypedia" id="7285">
    <property type="antibodies" value="163 antibodies from 25 providers"/>
</dbReference>
<dbReference type="DNASU" id="7866"/>
<dbReference type="Ensembl" id="ENST00000417626.8">
    <property type="protein sequence ID" value="ENSP00000402849.4"/>
    <property type="gene ID" value="ENSG00000214706.12"/>
</dbReference>
<dbReference type="Ensembl" id="ENST00000436390.5">
    <property type="protein sequence ID" value="ENSP00000392316.1"/>
    <property type="gene ID" value="ENSG00000214706.12"/>
</dbReference>
<dbReference type="GeneID" id="7866"/>
<dbReference type="KEGG" id="hsa:7866"/>
<dbReference type="MANE-Select" id="ENST00000417626.8">
    <property type="protein sequence ID" value="ENSP00000402849.4"/>
    <property type="RefSeq nucleotide sequence ID" value="NM_006764.5"/>
    <property type="RefSeq protein sequence ID" value="NP_006755.5"/>
</dbReference>
<dbReference type="UCSC" id="uc011bdp.2">
    <property type="organism name" value="human"/>
</dbReference>
<dbReference type="AGR" id="HGNC:5457"/>
<dbReference type="CTD" id="7866"/>
<dbReference type="DisGeNET" id="7866"/>
<dbReference type="GeneCards" id="IFRD2"/>
<dbReference type="HGNC" id="HGNC:5457">
    <property type="gene designation" value="IFRD2"/>
</dbReference>
<dbReference type="HPA" id="ENSG00000214706">
    <property type="expression patterns" value="Low tissue specificity"/>
</dbReference>
<dbReference type="MIM" id="602725">
    <property type="type" value="gene"/>
</dbReference>
<dbReference type="neXtProt" id="NX_Q12894"/>
<dbReference type="OpenTargets" id="ENSG00000214706"/>
<dbReference type="PharmGKB" id="PA29692"/>
<dbReference type="VEuPathDB" id="HostDB:ENSG00000214706"/>
<dbReference type="eggNOG" id="KOG2842">
    <property type="taxonomic scope" value="Eukaryota"/>
</dbReference>
<dbReference type="GeneTree" id="ENSGT00390000013347"/>
<dbReference type="HOGENOM" id="CLU_031384_1_1_1"/>
<dbReference type="InParanoid" id="Q12894"/>
<dbReference type="OMA" id="QCFEAIF"/>
<dbReference type="OrthoDB" id="18978at2759"/>
<dbReference type="PAN-GO" id="Q12894">
    <property type="GO annotations" value="0 GO annotations based on evolutionary models"/>
</dbReference>
<dbReference type="PhylomeDB" id="Q12894"/>
<dbReference type="TreeFam" id="TF313638"/>
<dbReference type="PathwayCommons" id="Q12894"/>
<dbReference type="SignaLink" id="Q12894"/>
<dbReference type="BioGRID-ORCS" id="7866">
    <property type="hits" value="23 hits in 1153 CRISPR screens"/>
</dbReference>
<dbReference type="ChiTaRS" id="IFRD2">
    <property type="organism name" value="human"/>
</dbReference>
<dbReference type="GenomeRNAi" id="7866"/>
<dbReference type="Pharos" id="Q12894">
    <property type="development level" value="Tbio"/>
</dbReference>
<dbReference type="PRO" id="PR:Q12894"/>
<dbReference type="Proteomes" id="UP000005640">
    <property type="component" value="Chromosome 3"/>
</dbReference>
<dbReference type="RNAct" id="Q12894">
    <property type="molecule type" value="protein"/>
</dbReference>
<dbReference type="Bgee" id="ENSG00000214706">
    <property type="expression patterns" value="Expressed in body of pancreas and 189 other cell types or tissues"/>
</dbReference>
<dbReference type="ExpressionAtlas" id="Q12894">
    <property type="expression patterns" value="baseline and differential"/>
</dbReference>
<dbReference type="GO" id="GO:0005634">
    <property type="term" value="C:nucleus"/>
    <property type="evidence" value="ECO:0007005"/>
    <property type="project" value="UniProtKB"/>
</dbReference>
<dbReference type="GO" id="GO:0043022">
    <property type="term" value="F:ribosome binding"/>
    <property type="evidence" value="ECO:0000314"/>
    <property type="project" value="UniProtKB"/>
</dbReference>
<dbReference type="GO" id="GO:0030371">
    <property type="term" value="F:translation repressor activity"/>
    <property type="evidence" value="ECO:0000314"/>
    <property type="project" value="UniProtKB"/>
</dbReference>
<dbReference type="GO" id="GO:0060612">
    <property type="term" value="P:adipose tissue development"/>
    <property type="evidence" value="ECO:0007669"/>
    <property type="project" value="Ensembl"/>
</dbReference>
<dbReference type="GO" id="GO:0045444">
    <property type="term" value="P:fat cell differentiation"/>
    <property type="evidence" value="ECO:0007669"/>
    <property type="project" value="Ensembl"/>
</dbReference>
<dbReference type="GO" id="GO:0017148">
    <property type="term" value="P:negative regulation of translation"/>
    <property type="evidence" value="ECO:0000314"/>
    <property type="project" value="UniProtKB"/>
</dbReference>
<dbReference type="GO" id="GO:0016055">
    <property type="term" value="P:Wnt signaling pathway"/>
    <property type="evidence" value="ECO:0007669"/>
    <property type="project" value="Ensembl"/>
</dbReference>
<dbReference type="FunFam" id="1.25.10.10:FF:000192">
    <property type="entry name" value="Interferon related developmental regulator 1"/>
    <property type="match status" value="1"/>
</dbReference>
<dbReference type="Gene3D" id="1.25.10.10">
    <property type="entry name" value="Leucine-rich Repeat Variant"/>
    <property type="match status" value="1"/>
</dbReference>
<dbReference type="InterPro" id="IPR011989">
    <property type="entry name" value="ARM-like"/>
</dbReference>
<dbReference type="InterPro" id="IPR016024">
    <property type="entry name" value="ARM-type_fold"/>
</dbReference>
<dbReference type="InterPro" id="IPR039777">
    <property type="entry name" value="IFRD"/>
</dbReference>
<dbReference type="InterPro" id="IPR006921">
    <property type="entry name" value="Interferon-rel_develop_reg_C"/>
</dbReference>
<dbReference type="InterPro" id="IPR007701">
    <property type="entry name" value="Interferon-rel_develop_reg_N"/>
</dbReference>
<dbReference type="PANTHER" id="PTHR12354">
    <property type="entry name" value="INTERFERON-RELATED DEVELOPMENTAL REGULATOR"/>
    <property type="match status" value="1"/>
</dbReference>
<dbReference type="PANTHER" id="PTHR12354:SF8">
    <property type="entry name" value="INTERFERON-RELATED DEVELOPMENTAL REGULATOR 2"/>
    <property type="match status" value="1"/>
</dbReference>
<dbReference type="Pfam" id="PF05004">
    <property type="entry name" value="IFRD"/>
    <property type="match status" value="1"/>
</dbReference>
<dbReference type="Pfam" id="PF04836">
    <property type="entry name" value="IFRD_C"/>
    <property type="match status" value="1"/>
</dbReference>
<dbReference type="SUPFAM" id="SSF48371">
    <property type="entry name" value="ARM repeat"/>
    <property type="match status" value="1"/>
</dbReference>
<keyword id="KW-1267">Proteomics identification</keyword>
<keyword id="KW-1185">Reference proteome</keyword>
<keyword id="KW-0810">Translation regulation</keyword>
<sequence length="442" mass="48048">MPRARKGNTLRKGGQRRGGGARSSAQADSGSSDDEAASEARSTASECPSLLSTTAEDSLGGDVVDEQGQQEDLEEKLKEYVDCLTDKSAKTRQGALESLRLALASRLLPDFLLERRLTLADALEKCLKKGKGEEQALAAAVLGLLCVQLGPGPKGEELFHSLQPLLVSVLSDSTASPAARLHCASALGLGCYVAAADIQDLVSCLACLESVFSRFYGLGGSSTSPVVPASLHGLLSAALQAWALLLTICPSTQISHILDRQLPRLPQLLSSESVNLRIAAGETIALLFELARDLEEEFVYEDMEALCSVLRTLATDSNKYRAKADRRRQRSTFRAVLHSVEGGECEEEIVRFGFEVLYMDSWARHRIYAAFKEVLGSGMHHHLQNNELLRDIFGLGPVLLLDATALKACKVPRFEKHLYNAAAFKARTKARSRVRDKRADIL</sequence>
<comment type="function">
    <text evidence="1 4">Ribosome-binding protein that acts as an inhibitor of mRNA translation by promoting ribosome inactivation (PubMed:30355441). Associates with the P- and E-sites of the ribosome and inserts a C-terminal helix into the mRNA exit channel to preclude translation (By similarity).</text>
</comment>
<comment type="subunit">
    <text evidence="4">Associates with ribosomes; promoting ribosome inactivation.</text>
</comment>
<comment type="interaction">
    <interactant intactId="EBI-2512448">
        <id>Q12894</id>
    </interactant>
    <interactant intactId="EBI-17181882">
        <id>O75564-2</id>
        <label>JRK</label>
    </interactant>
    <organismsDiffer>false</organismsDiffer>
    <experiments>3</experiments>
</comment>
<comment type="interaction">
    <interactant intactId="EBI-2512448">
        <id>Q12894</id>
    </interactant>
    <interactant intactId="EBI-724076">
        <id>Q99750</id>
        <label>MDFI</label>
    </interactant>
    <organismsDiffer>false</organismsDiffer>
    <experiments>3</experiments>
</comment>
<comment type="interaction">
    <interactant intactId="EBI-2512448">
        <id>Q12894</id>
    </interactant>
    <interactant intactId="EBI-6115729">
        <id>Q9Y6K5</id>
        <label>OAS3</label>
    </interactant>
    <organismsDiffer>false</organismsDiffer>
    <experiments>2</experiments>
</comment>
<comment type="interaction">
    <interactant intactId="EBI-2512448">
        <id>Q12894</id>
    </interactant>
    <interactant intactId="EBI-2339946">
        <id>Q9C0C9</id>
        <label>UBE2O</label>
    </interactant>
    <organismsDiffer>false</organismsDiffer>
    <experiments>3</experiments>
</comment>
<comment type="tissue specificity">
    <text evidence="5">Expressed in many tissues including heart, brain, placenta, lung, liver, skeletal muscle, kidney and pancreas.</text>
</comment>
<comment type="similarity">
    <text evidence="8">Belongs to the IFRD family.</text>
</comment>
<comment type="sequence caution" evidence="8">
    <conflict type="erroneous initiation">
        <sequence resource="EMBL-CDS" id="CAA73027"/>
    </conflict>
    <text>Extended N-terminus.</text>
</comment>
<comment type="sequence caution" evidence="8">
    <conflict type="erroneous gene model prediction">
        <sequence resource="EMBL-CDS" id="EAW65070"/>
    </conflict>
</comment>